<name>DAPD_BRUO2</name>
<reference key="1">
    <citation type="journal article" date="2009" name="PLoS ONE">
        <title>Genome degradation in Brucella ovis corresponds with narrowing of its host range and tissue tropism.</title>
        <authorList>
            <person name="Tsolis R.M."/>
            <person name="Seshadri R."/>
            <person name="Santos R.L."/>
            <person name="Sangari F.J."/>
            <person name="Lobo J.M."/>
            <person name="de Jong M.F."/>
            <person name="Ren Q."/>
            <person name="Myers G."/>
            <person name="Brinkac L.M."/>
            <person name="Nelson W.C."/>
            <person name="Deboy R.T."/>
            <person name="Angiuoli S."/>
            <person name="Khouri H."/>
            <person name="Dimitrov G."/>
            <person name="Robinson J.R."/>
            <person name="Mulligan S."/>
            <person name="Walker R.L."/>
            <person name="Elzer P.E."/>
            <person name="Hassan K.A."/>
            <person name="Paulsen I.T."/>
        </authorList>
    </citation>
    <scope>NUCLEOTIDE SEQUENCE [LARGE SCALE GENOMIC DNA]</scope>
    <source>
        <strain>ATCC 25840 / 63/290 / NCTC 10512</strain>
    </source>
</reference>
<sequence length="284" mass="30753">MTKPDLASLEKTIEKAFDERDGINTATRGEVREAVEQSLILLDRGEVRVAEKQADGNWHVNQWLKKAVLLSFRLNPMEVIKGGPGQSSWWDKVPSKFDGWTANEFEKAGFRAVPNCIVRHSAYIAPNAILMPSFVNLGAYVDKGAMIDTWATVGSCAQIGKNVHLSGGVGIGGVLEPMQAGPTIIEDNCFIGARSEVVEGCIVREGSVLGMGVFIGKSTKIVDRATGEVFYGEVPPYSVVVAGTMPGKNVPGENWGPSLYCAVIVKRADEKTRSKTSINELLRD</sequence>
<accession>A5VVT4</accession>
<dbReference type="EC" id="2.3.1.117" evidence="1"/>
<dbReference type="EMBL" id="CP000709">
    <property type="protein sequence ID" value="ABQ62359.1"/>
    <property type="molecule type" value="Genomic_DNA"/>
</dbReference>
<dbReference type="RefSeq" id="WP_002965622.1">
    <property type="nucleotide sequence ID" value="NC_009504.1"/>
</dbReference>
<dbReference type="SMR" id="A5VVT4"/>
<dbReference type="GeneID" id="97534922"/>
<dbReference type="KEGG" id="bov:BOV_A0969"/>
<dbReference type="HOGENOM" id="CLU_050859_0_1_5"/>
<dbReference type="PhylomeDB" id="A5VVT4"/>
<dbReference type="UniPathway" id="UPA00034">
    <property type="reaction ID" value="UER00019"/>
</dbReference>
<dbReference type="Proteomes" id="UP000006383">
    <property type="component" value="Chromosome II"/>
</dbReference>
<dbReference type="GO" id="GO:0005737">
    <property type="term" value="C:cytoplasm"/>
    <property type="evidence" value="ECO:0007669"/>
    <property type="project" value="UniProtKB-SubCell"/>
</dbReference>
<dbReference type="GO" id="GO:0008666">
    <property type="term" value="F:2,3,4,5-tetrahydropyridine-2,6-dicarboxylate N-succinyltransferase activity"/>
    <property type="evidence" value="ECO:0007669"/>
    <property type="project" value="UniProtKB-UniRule"/>
</dbReference>
<dbReference type="GO" id="GO:0019877">
    <property type="term" value="P:diaminopimelate biosynthetic process"/>
    <property type="evidence" value="ECO:0007669"/>
    <property type="project" value="UniProtKB-UniRule"/>
</dbReference>
<dbReference type="GO" id="GO:0009089">
    <property type="term" value="P:lysine biosynthetic process via diaminopimelate"/>
    <property type="evidence" value="ECO:0007669"/>
    <property type="project" value="UniProtKB-UniRule"/>
</dbReference>
<dbReference type="CDD" id="cd03350">
    <property type="entry name" value="LbH_THP_succinylT"/>
    <property type="match status" value="1"/>
</dbReference>
<dbReference type="Gene3D" id="2.160.10.10">
    <property type="entry name" value="Hexapeptide repeat proteins"/>
    <property type="match status" value="1"/>
</dbReference>
<dbReference type="Gene3D" id="1.10.166.10">
    <property type="entry name" value="Tetrahydrodipicolinate-N-succinyltransferase, N-terminal domain"/>
    <property type="match status" value="1"/>
</dbReference>
<dbReference type="HAMAP" id="MF_00811">
    <property type="entry name" value="DapD"/>
    <property type="match status" value="1"/>
</dbReference>
<dbReference type="InterPro" id="IPR005664">
    <property type="entry name" value="DapD_Trfase_Hexpep_rpt_fam"/>
</dbReference>
<dbReference type="InterPro" id="IPR001451">
    <property type="entry name" value="Hexapep"/>
</dbReference>
<dbReference type="InterPro" id="IPR018357">
    <property type="entry name" value="Hexapep_transf_CS"/>
</dbReference>
<dbReference type="InterPro" id="IPR023180">
    <property type="entry name" value="THP_succinylTrfase_dom1"/>
</dbReference>
<dbReference type="InterPro" id="IPR037133">
    <property type="entry name" value="THP_succinylTrfase_N_sf"/>
</dbReference>
<dbReference type="InterPro" id="IPR050179">
    <property type="entry name" value="Trans_hexapeptide_repeat"/>
</dbReference>
<dbReference type="InterPro" id="IPR011004">
    <property type="entry name" value="Trimer_LpxA-like_sf"/>
</dbReference>
<dbReference type="NCBIfam" id="TIGR00965">
    <property type="entry name" value="dapD"/>
    <property type="match status" value="1"/>
</dbReference>
<dbReference type="NCBIfam" id="NF008808">
    <property type="entry name" value="PRK11830.1"/>
    <property type="match status" value="1"/>
</dbReference>
<dbReference type="PANTHER" id="PTHR43300:SF10">
    <property type="entry name" value="2,3,4,5-TETRAHYDROPYRIDINE-2,6-DICARBOXYLATE N-ACETYLTRANSFERASE"/>
    <property type="match status" value="1"/>
</dbReference>
<dbReference type="PANTHER" id="PTHR43300">
    <property type="entry name" value="ACETYLTRANSFERASE"/>
    <property type="match status" value="1"/>
</dbReference>
<dbReference type="Pfam" id="PF14602">
    <property type="entry name" value="Hexapep_2"/>
    <property type="match status" value="1"/>
</dbReference>
<dbReference type="Pfam" id="PF14805">
    <property type="entry name" value="THDPS_N_2"/>
    <property type="match status" value="1"/>
</dbReference>
<dbReference type="SUPFAM" id="SSF51161">
    <property type="entry name" value="Trimeric LpxA-like enzymes"/>
    <property type="match status" value="1"/>
</dbReference>
<dbReference type="PROSITE" id="PS00101">
    <property type="entry name" value="HEXAPEP_TRANSFERASES"/>
    <property type="match status" value="1"/>
</dbReference>
<gene>
    <name evidence="1" type="primary">dapD</name>
    <name type="ordered locus">BOV_A0969</name>
</gene>
<comment type="catalytic activity">
    <reaction evidence="1">
        <text>(S)-2,3,4,5-tetrahydrodipicolinate + succinyl-CoA + H2O = (S)-2-succinylamino-6-oxoheptanedioate + CoA</text>
        <dbReference type="Rhea" id="RHEA:17325"/>
        <dbReference type="ChEBI" id="CHEBI:15377"/>
        <dbReference type="ChEBI" id="CHEBI:15685"/>
        <dbReference type="ChEBI" id="CHEBI:16845"/>
        <dbReference type="ChEBI" id="CHEBI:57287"/>
        <dbReference type="ChEBI" id="CHEBI:57292"/>
        <dbReference type="EC" id="2.3.1.117"/>
    </reaction>
</comment>
<comment type="pathway">
    <text evidence="1">Amino-acid biosynthesis; L-lysine biosynthesis via DAP pathway; LL-2,6-diaminopimelate from (S)-tetrahydrodipicolinate (succinylase route): step 1/3.</text>
</comment>
<comment type="subunit">
    <text evidence="1">Homotrimer.</text>
</comment>
<comment type="subcellular location">
    <subcellularLocation>
        <location evidence="1">Cytoplasm</location>
    </subcellularLocation>
</comment>
<comment type="similarity">
    <text evidence="1">Belongs to the transferase hexapeptide repeat family.</text>
</comment>
<protein>
    <recommendedName>
        <fullName evidence="1">2,3,4,5-tetrahydropyridine-2,6-dicarboxylate N-succinyltransferase</fullName>
        <ecNumber evidence="1">2.3.1.117</ecNumber>
    </recommendedName>
    <alternativeName>
        <fullName evidence="1">Tetrahydrodipicolinate N-succinyltransferase</fullName>
        <shortName evidence="1">THDP succinyltransferase</shortName>
        <shortName evidence="1">THP succinyltransferase</shortName>
        <shortName evidence="1">Tetrahydropicolinate succinylase</shortName>
    </alternativeName>
</protein>
<organism>
    <name type="scientific">Brucella ovis (strain ATCC 25840 / 63/290 / NCTC 10512)</name>
    <dbReference type="NCBI Taxonomy" id="444178"/>
    <lineage>
        <taxon>Bacteria</taxon>
        <taxon>Pseudomonadati</taxon>
        <taxon>Pseudomonadota</taxon>
        <taxon>Alphaproteobacteria</taxon>
        <taxon>Hyphomicrobiales</taxon>
        <taxon>Brucellaceae</taxon>
        <taxon>Brucella/Ochrobactrum group</taxon>
        <taxon>Brucella</taxon>
    </lineage>
</organism>
<feature type="chain" id="PRO_1000047123" description="2,3,4,5-tetrahydropyridine-2,6-dicarboxylate N-succinyltransferase">
    <location>
        <begin position="1"/>
        <end position="284"/>
    </location>
</feature>
<feature type="binding site" evidence="1">
    <location>
        <position position="111"/>
    </location>
    <ligand>
        <name>substrate</name>
    </ligand>
</feature>
<feature type="binding site" evidence="1">
    <location>
        <position position="148"/>
    </location>
    <ligand>
        <name>substrate</name>
    </ligand>
</feature>
<keyword id="KW-0012">Acyltransferase</keyword>
<keyword id="KW-0028">Amino-acid biosynthesis</keyword>
<keyword id="KW-0963">Cytoplasm</keyword>
<keyword id="KW-0220">Diaminopimelate biosynthesis</keyword>
<keyword id="KW-0457">Lysine biosynthesis</keyword>
<keyword id="KW-0677">Repeat</keyword>
<keyword id="KW-0808">Transferase</keyword>
<evidence type="ECO:0000255" key="1">
    <source>
        <dbReference type="HAMAP-Rule" id="MF_00811"/>
    </source>
</evidence>
<proteinExistence type="inferred from homology"/>